<organism>
    <name type="scientific">Bos taurus</name>
    <name type="common">Bovine</name>
    <dbReference type="NCBI Taxonomy" id="9913"/>
    <lineage>
        <taxon>Eukaryota</taxon>
        <taxon>Metazoa</taxon>
        <taxon>Chordata</taxon>
        <taxon>Craniata</taxon>
        <taxon>Vertebrata</taxon>
        <taxon>Euteleostomi</taxon>
        <taxon>Mammalia</taxon>
        <taxon>Eutheria</taxon>
        <taxon>Laurasiatheria</taxon>
        <taxon>Artiodactyla</taxon>
        <taxon>Ruminantia</taxon>
        <taxon>Pecora</taxon>
        <taxon>Bovidae</taxon>
        <taxon>Bovinae</taxon>
        <taxon>Bos</taxon>
    </lineage>
</organism>
<accession>Q17QN4</accession>
<evidence type="ECO:0000250" key="1">
    <source>
        <dbReference type="UniProtKB" id="P97952"/>
    </source>
</evidence>
<evidence type="ECO:0000250" key="2">
    <source>
        <dbReference type="UniProtKB" id="Q00954"/>
    </source>
</evidence>
<evidence type="ECO:0000250" key="3">
    <source>
        <dbReference type="UniProtKB" id="Q07699"/>
    </source>
</evidence>
<evidence type="ECO:0000255" key="4"/>
<evidence type="ECO:0000305" key="5"/>
<dbReference type="EMBL" id="BC118258">
    <property type="protein sequence ID" value="AAI18259.1"/>
    <property type="molecule type" value="mRNA"/>
</dbReference>
<dbReference type="RefSeq" id="NP_001069964.1">
    <property type="nucleotide sequence ID" value="NM_001076496.1"/>
</dbReference>
<dbReference type="SMR" id="Q17QN4"/>
<dbReference type="FunCoup" id="Q17QN4">
    <property type="interactions" value="463"/>
</dbReference>
<dbReference type="STRING" id="9913.ENSBTAP00000004980"/>
<dbReference type="GlyCosmos" id="Q17QN4">
    <property type="glycosylation" value="4 sites, No reported glycans"/>
</dbReference>
<dbReference type="GlyGen" id="Q17QN4">
    <property type="glycosylation" value="4 sites"/>
</dbReference>
<dbReference type="PaxDb" id="9913-ENSBTAP00000004980"/>
<dbReference type="GeneID" id="618204"/>
<dbReference type="KEGG" id="bta:618204"/>
<dbReference type="CTD" id="6324"/>
<dbReference type="VEuPathDB" id="HostDB:ENSBTAG00000003826"/>
<dbReference type="eggNOG" id="ENOG502R0UM">
    <property type="taxonomic scope" value="Eukaryota"/>
</dbReference>
<dbReference type="HOGENOM" id="CLU_096296_0_0_1"/>
<dbReference type="InParanoid" id="Q17QN4"/>
<dbReference type="OMA" id="VWGGCVE"/>
<dbReference type="OrthoDB" id="8868224at2759"/>
<dbReference type="TreeFam" id="TF332097"/>
<dbReference type="Reactome" id="R-BTA-5576892">
    <property type="pathway name" value="Phase 0 - rapid depolarisation"/>
</dbReference>
<dbReference type="Proteomes" id="UP000009136">
    <property type="component" value="Chromosome 18"/>
</dbReference>
<dbReference type="Bgee" id="ENSBTAG00000003826">
    <property type="expression patterns" value="Expressed in cerebellum and 98 other cell types or tissues"/>
</dbReference>
<dbReference type="GO" id="GO:0030424">
    <property type="term" value="C:axon"/>
    <property type="evidence" value="ECO:0007669"/>
    <property type="project" value="UniProtKB-SubCell"/>
</dbReference>
<dbReference type="GO" id="GO:0043204">
    <property type="term" value="C:perikaryon"/>
    <property type="evidence" value="ECO:0007669"/>
    <property type="project" value="UniProtKB-SubCell"/>
</dbReference>
<dbReference type="GO" id="GO:0005886">
    <property type="term" value="C:plasma membrane"/>
    <property type="evidence" value="ECO:0000250"/>
    <property type="project" value="UniProtKB"/>
</dbReference>
<dbReference type="GO" id="GO:0001518">
    <property type="term" value="C:voltage-gated sodium channel complex"/>
    <property type="evidence" value="ECO:0000250"/>
    <property type="project" value="UniProtKB"/>
</dbReference>
<dbReference type="GO" id="GO:0019871">
    <property type="term" value="F:sodium channel inhibitor activity"/>
    <property type="evidence" value="ECO:0000318"/>
    <property type="project" value="GO_Central"/>
</dbReference>
<dbReference type="GO" id="GO:0017080">
    <property type="term" value="F:sodium channel regulator activity"/>
    <property type="evidence" value="ECO:0000250"/>
    <property type="project" value="UniProtKB"/>
</dbReference>
<dbReference type="GO" id="GO:0044325">
    <property type="term" value="F:transmembrane transporter binding"/>
    <property type="evidence" value="ECO:0000318"/>
    <property type="project" value="GO_Central"/>
</dbReference>
<dbReference type="GO" id="GO:0086002">
    <property type="term" value="P:cardiac muscle cell action potential involved in contraction"/>
    <property type="evidence" value="ECO:0000318"/>
    <property type="project" value="GO_Central"/>
</dbReference>
<dbReference type="GO" id="GO:0086012">
    <property type="term" value="P:membrane depolarization during cardiac muscle cell action potential"/>
    <property type="evidence" value="ECO:0000318"/>
    <property type="project" value="GO_Central"/>
</dbReference>
<dbReference type="GO" id="GO:1905152">
    <property type="term" value="P:positive regulation of voltage-gated sodium channel activity"/>
    <property type="evidence" value="ECO:0000250"/>
    <property type="project" value="UniProtKB"/>
</dbReference>
<dbReference type="GO" id="GO:0086091">
    <property type="term" value="P:regulation of heart rate by cardiac conduction"/>
    <property type="evidence" value="ECO:0000318"/>
    <property type="project" value="GO_Central"/>
</dbReference>
<dbReference type="GO" id="GO:0035725">
    <property type="term" value="P:sodium ion transmembrane transport"/>
    <property type="evidence" value="ECO:0000318"/>
    <property type="project" value="GO_Central"/>
</dbReference>
<dbReference type="FunFam" id="2.60.40.10:FF:000581">
    <property type="entry name" value="sodium channel subunit beta-1"/>
    <property type="match status" value="1"/>
</dbReference>
<dbReference type="Gene3D" id="2.60.40.10">
    <property type="entry name" value="Immunoglobulins"/>
    <property type="match status" value="1"/>
</dbReference>
<dbReference type="InterPro" id="IPR036179">
    <property type="entry name" value="Ig-like_dom_sf"/>
</dbReference>
<dbReference type="InterPro" id="IPR013783">
    <property type="entry name" value="Ig-like_fold"/>
</dbReference>
<dbReference type="InterPro" id="IPR013106">
    <property type="entry name" value="Ig_V-set"/>
</dbReference>
<dbReference type="InterPro" id="IPR027098">
    <property type="entry name" value="Na_channel_b1/b3"/>
</dbReference>
<dbReference type="PANTHER" id="PTHR10546:SF2">
    <property type="entry name" value="SODIUM CHANNEL SUBUNIT BETA-1"/>
    <property type="match status" value="1"/>
</dbReference>
<dbReference type="PANTHER" id="PTHR10546">
    <property type="entry name" value="SODIUM CHANNEL SUBUNIT BETA-1 AND 3"/>
    <property type="match status" value="1"/>
</dbReference>
<dbReference type="Pfam" id="PF07686">
    <property type="entry name" value="V-set"/>
    <property type="match status" value="1"/>
</dbReference>
<dbReference type="SUPFAM" id="SSF48726">
    <property type="entry name" value="Immunoglobulin"/>
    <property type="match status" value="1"/>
</dbReference>
<name>SCN1B_BOVIN</name>
<proteinExistence type="evidence at transcript level"/>
<protein>
    <recommendedName>
        <fullName evidence="3">Sodium channel regulatory subunit beta-1</fullName>
    </recommendedName>
</protein>
<feature type="signal peptide" evidence="2">
    <location>
        <begin position="1"/>
        <end position="18"/>
    </location>
</feature>
<feature type="chain" id="PRO_0000286141" description="Sodium channel regulatory subunit beta-1">
    <location>
        <begin position="19"/>
        <end position="218"/>
    </location>
</feature>
<feature type="topological domain" description="Extracellular" evidence="5">
    <location>
        <begin position="19"/>
        <end position="157"/>
    </location>
</feature>
<feature type="transmembrane region" description="Helical" evidence="3">
    <location>
        <begin position="158"/>
        <end position="179"/>
    </location>
</feature>
<feature type="topological domain" description="Cytoplasmic" evidence="5">
    <location>
        <begin position="180"/>
        <end position="218"/>
    </location>
</feature>
<feature type="domain" description="Ig-like C2-type">
    <location>
        <begin position="22"/>
        <end position="150"/>
    </location>
</feature>
<feature type="glycosylation site" description="N-linked (GlcNAc...) asparagine" evidence="4">
    <location>
        <position position="93"/>
    </location>
</feature>
<feature type="glycosylation site" description="N-linked (GlcNAc...) asparagine" evidence="4">
    <location>
        <position position="110"/>
    </location>
</feature>
<feature type="glycosylation site" description="N-linked (GlcNAc...) asparagine" evidence="4">
    <location>
        <position position="114"/>
    </location>
</feature>
<feature type="glycosylation site" description="N-linked (GlcNAc...) asparagine" evidence="4">
    <location>
        <position position="135"/>
    </location>
</feature>
<feature type="disulfide bond" evidence="3">
    <location>
        <begin position="21"/>
        <end position="43"/>
    </location>
</feature>
<feature type="disulfide bond" evidence="3">
    <location>
        <begin position="40"/>
        <end position="121"/>
    </location>
</feature>
<sequence length="218" mass="24711">MGTLLAFVVGAALVSSAWGGCVEVDSETEAVYGMTFKILCISCKRRSETNAETFTEWTFRQKGTEEFVKILRYENEVLQLEEDERFEGRVVWNGSRGTKDLQDLSIFITNVTYNHSGDYECHVYRLLFFDNYEHNTSVVKKIHLEVVDKANRDMASIVSEIMMYVLIVVLTIWLVAEMVYCYKKIAAATEAAAQENASEYLAITSESKENCTGVQVAE</sequence>
<reference key="1">
    <citation type="submission" date="2006-06" db="EMBL/GenBank/DDBJ databases">
        <authorList>
            <consortium name="NIH - Mammalian Gene Collection (MGC) project"/>
        </authorList>
    </citation>
    <scope>NUCLEOTIDE SEQUENCE [LARGE SCALE MRNA]</scope>
    <source>
        <strain>Hereford</strain>
        <tissue>Basal ganglia</tissue>
    </source>
</reference>
<keyword id="KW-1003">Cell membrane</keyword>
<keyword id="KW-0966">Cell projection</keyword>
<keyword id="KW-1015">Disulfide bond</keyword>
<keyword id="KW-0325">Glycoprotein</keyword>
<keyword id="KW-0393">Immunoglobulin domain</keyword>
<keyword id="KW-0406">Ion transport</keyword>
<keyword id="KW-0472">Membrane</keyword>
<keyword id="KW-1185">Reference proteome</keyword>
<keyword id="KW-0732">Signal</keyword>
<keyword id="KW-0915">Sodium</keyword>
<keyword id="KW-0739">Sodium transport</keyword>
<keyword id="KW-0812">Transmembrane</keyword>
<keyword id="KW-1133">Transmembrane helix</keyword>
<keyword id="KW-0813">Transport</keyword>
<comment type="function">
    <text evidence="3">Regulatory subunit of multiple voltage-gated sodium (Nav) channels directly mediating the depolarization of excitable membranes. Navs, also called VGSCs (voltage-gated sodium channels) or VDSCs (voltage-dependent sodium channels), operate by switching between closed and open conformations depending on the voltage difference across the membrane. In the open conformation they allow Na(+) ions to selectively pass through the pore, along their electrochemical gradient. The influx of Na+ ions provokes membrane depolarization, initiating the propagation of electrical signals throughout cells and tissues. The accessory beta subunits participate in localization and functional modulation of the Nav channels. Modulates the activity of SCN1A/Nav1.1, SCN2A/Nav1.2, SCN3A/Nav1.3, SCN4A/Nav1.4, SCN5A/Nav1.5, SCN8A/Nav1.6, SCN9A/Nav1.7 and SCN10A/Nav1.8.</text>
</comment>
<comment type="subunit">
    <text evidence="1 2 3">A voltage-gated sodium (Nav) channel consists of an ion-conducting pore-forming alpha subunit functional on its own that is regulated by one or more beta subunits. Interacts with SCN1A; regulatory subunit of SCN1A/Nav1.1. Interacts with SCN3A; regulatory subunit of SCN3A/Nav1.3. Interacts with SCN4A; regulatory subunit of SCN4A/Nav1.4. Interacts with SCN5A; regulatory subunit of SCN5A/Nav1.5. Interacts with SCN8A; regulatory subunit of SCN8A/Nav1.6 (By similarity). Interacts with SCN9A; regulatory subunit of SCN9A/Nav1.7 (By similarity). Interacts with SCN10A; regulatory subunit of SCN10A/Nav1.8 (By similarity). Interacts with NFASC (By similarity). Interacts with TMEM65 (By similarity).</text>
</comment>
<comment type="subcellular location">
    <subcellularLocation>
        <location evidence="1">Cell membrane</location>
        <topology evidence="3">Single-pass type I membrane protein</topology>
    </subcellularLocation>
    <subcellularLocation>
        <location evidence="1">Perikaryon</location>
    </subcellularLocation>
    <subcellularLocation>
        <location evidence="1">Cell projection</location>
    </subcellularLocation>
    <subcellularLocation>
        <location evidence="2">Cell projection</location>
        <location evidence="2">Axon</location>
    </subcellularLocation>
    <text evidence="1">Detected at nodes of Ranvier on the sciatic nerve.</text>
</comment>
<comment type="similarity">
    <text evidence="5">Belongs to the sodium channel auxiliary subunit SCN1B (TC 8.A.17) family.</text>
</comment>
<gene>
    <name evidence="3" type="primary">SCN1B</name>
</gene>